<reference key="1">
    <citation type="journal article" date="2002" name="Nat. Biotechnol.">
        <title>Genome sequence of the dissimilatory metal ion-reducing bacterium Shewanella oneidensis.</title>
        <authorList>
            <person name="Heidelberg J.F."/>
            <person name="Paulsen I.T."/>
            <person name="Nelson K.E."/>
            <person name="Gaidos E.J."/>
            <person name="Nelson W.C."/>
            <person name="Read T.D."/>
            <person name="Eisen J.A."/>
            <person name="Seshadri R."/>
            <person name="Ward N.L."/>
            <person name="Methe B.A."/>
            <person name="Clayton R.A."/>
            <person name="Meyer T."/>
            <person name="Tsapin A."/>
            <person name="Scott J."/>
            <person name="Beanan M.J."/>
            <person name="Brinkac L.M."/>
            <person name="Daugherty S.C."/>
            <person name="DeBoy R.T."/>
            <person name="Dodson R.J."/>
            <person name="Durkin A.S."/>
            <person name="Haft D.H."/>
            <person name="Kolonay J.F."/>
            <person name="Madupu R."/>
            <person name="Peterson J.D."/>
            <person name="Umayam L.A."/>
            <person name="White O."/>
            <person name="Wolf A.M."/>
            <person name="Vamathevan J.J."/>
            <person name="Weidman J.F."/>
            <person name="Impraim M."/>
            <person name="Lee K."/>
            <person name="Berry K.J."/>
            <person name="Lee C."/>
            <person name="Mueller J."/>
            <person name="Khouri H.M."/>
            <person name="Gill J."/>
            <person name="Utterback T.R."/>
            <person name="McDonald L.A."/>
            <person name="Feldblyum T.V."/>
            <person name="Smith H.O."/>
            <person name="Venter J.C."/>
            <person name="Nealson K.H."/>
            <person name="Fraser C.M."/>
        </authorList>
    </citation>
    <scope>NUCLEOTIDE SEQUENCE [LARGE SCALE GENOMIC DNA]</scope>
    <source>
        <strain>ATCC 700550 / JCM 31522 / CIP 106686 / LMG 19005 / NCIMB 14063 / MR-1</strain>
    </source>
</reference>
<keyword id="KW-0028">Amino-acid biosynthesis</keyword>
<keyword id="KW-0057">Aromatic amino acid biosynthesis</keyword>
<keyword id="KW-0456">Lyase</keyword>
<keyword id="KW-0663">Pyridoxal phosphate</keyword>
<keyword id="KW-1185">Reference proteome</keyword>
<keyword id="KW-0822">Tryptophan biosynthesis</keyword>
<dbReference type="EC" id="4.2.1.20" evidence="1"/>
<dbReference type="EMBL" id="AE014299">
    <property type="protein sequence ID" value="AAN56035.1"/>
    <property type="molecule type" value="Genomic_DNA"/>
</dbReference>
<dbReference type="RefSeq" id="NP_718591.1">
    <property type="nucleotide sequence ID" value="NC_004347.2"/>
</dbReference>
<dbReference type="RefSeq" id="WP_011072928.1">
    <property type="nucleotide sequence ID" value="NC_004347.2"/>
</dbReference>
<dbReference type="SMR" id="Q8ECV0"/>
<dbReference type="STRING" id="211586.SO_3023"/>
<dbReference type="PaxDb" id="211586-SO_3023"/>
<dbReference type="KEGG" id="son:SO_3023"/>
<dbReference type="PATRIC" id="fig|211586.12.peg.2918"/>
<dbReference type="eggNOG" id="COG0133">
    <property type="taxonomic scope" value="Bacteria"/>
</dbReference>
<dbReference type="HOGENOM" id="CLU_016734_3_1_6"/>
<dbReference type="OrthoDB" id="9766131at2"/>
<dbReference type="PhylomeDB" id="Q8ECV0"/>
<dbReference type="BioCyc" id="SONE211586:G1GMP-2797-MONOMER"/>
<dbReference type="UniPathway" id="UPA00035">
    <property type="reaction ID" value="UER00044"/>
</dbReference>
<dbReference type="Proteomes" id="UP000008186">
    <property type="component" value="Chromosome"/>
</dbReference>
<dbReference type="GO" id="GO:0005737">
    <property type="term" value="C:cytoplasm"/>
    <property type="evidence" value="ECO:0000318"/>
    <property type="project" value="GO_Central"/>
</dbReference>
<dbReference type="GO" id="GO:0004834">
    <property type="term" value="F:tryptophan synthase activity"/>
    <property type="evidence" value="ECO:0007669"/>
    <property type="project" value="UniProtKB-UniRule"/>
</dbReference>
<dbReference type="GO" id="GO:0000162">
    <property type="term" value="P:L-tryptophan biosynthetic process"/>
    <property type="evidence" value="ECO:0000318"/>
    <property type="project" value="GO_Central"/>
</dbReference>
<dbReference type="CDD" id="cd06446">
    <property type="entry name" value="Trp-synth_B"/>
    <property type="match status" value="1"/>
</dbReference>
<dbReference type="FunFam" id="3.40.50.1100:FF:000001">
    <property type="entry name" value="Tryptophan synthase beta chain"/>
    <property type="match status" value="1"/>
</dbReference>
<dbReference type="FunFam" id="3.40.50.1100:FF:000004">
    <property type="entry name" value="Tryptophan synthase beta chain"/>
    <property type="match status" value="1"/>
</dbReference>
<dbReference type="Gene3D" id="3.40.50.1100">
    <property type="match status" value="2"/>
</dbReference>
<dbReference type="HAMAP" id="MF_00133">
    <property type="entry name" value="Trp_synth_beta"/>
    <property type="match status" value="1"/>
</dbReference>
<dbReference type="InterPro" id="IPR006653">
    <property type="entry name" value="Trp_synth_b_CS"/>
</dbReference>
<dbReference type="InterPro" id="IPR006654">
    <property type="entry name" value="Trp_synth_beta"/>
</dbReference>
<dbReference type="InterPro" id="IPR023026">
    <property type="entry name" value="Trp_synth_beta/beta-like"/>
</dbReference>
<dbReference type="InterPro" id="IPR001926">
    <property type="entry name" value="TrpB-like_PALP"/>
</dbReference>
<dbReference type="InterPro" id="IPR036052">
    <property type="entry name" value="TrpB-like_PALP_sf"/>
</dbReference>
<dbReference type="NCBIfam" id="TIGR00263">
    <property type="entry name" value="trpB"/>
    <property type="match status" value="1"/>
</dbReference>
<dbReference type="PANTHER" id="PTHR48077:SF3">
    <property type="entry name" value="TRYPTOPHAN SYNTHASE"/>
    <property type="match status" value="1"/>
</dbReference>
<dbReference type="PANTHER" id="PTHR48077">
    <property type="entry name" value="TRYPTOPHAN SYNTHASE-RELATED"/>
    <property type="match status" value="1"/>
</dbReference>
<dbReference type="Pfam" id="PF00291">
    <property type="entry name" value="PALP"/>
    <property type="match status" value="1"/>
</dbReference>
<dbReference type="PIRSF" id="PIRSF001413">
    <property type="entry name" value="Trp_syn_beta"/>
    <property type="match status" value="1"/>
</dbReference>
<dbReference type="SUPFAM" id="SSF53686">
    <property type="entry name" value="Tryptophan synthase beta subunit-like PLP-dependent enzymes"/>
    <property type="match status" value="1"/>
</dbReference>
<dbReference type="PROSITE" id="PS00168">
    <property type="entry name" value="TRP_SYNTHASE_BETA"/>
    <property type="match status" value="1"/>
</dbReference>
<gene>
    <name evidence="1" type="primary">trpB</name>
    <name type="ordered locus">SO_3023</name>
</gene>
<organism>
    <name type="scientific">Shewanella oneidensis (strain ATCC 700550 / JCM 31522 / CIP 106686 / LMG 19005 / NCIMB 14063 / MR-1)</name>
    <dbReference type="NCBI Taxonomy" id="211586"/>
    <lineage>
        <taxon>Bacteria</taxon>
        <taxon>Pseudomonadati</taxon>
        <taxon>Pseudomonadota</taxon>
        <taxon>Gammaproteobacteria</taxon>
        <taxon>Alteromonadales</taxon>
        <taxon>Shewanellaceae</taxon>
        <taxon>Shewanella</taxon>
    </lineage>
</organism>
<protein>
    <recommendedName>
        <fullName evidence="1">Tryptophan synthase beta chain</fullName>
        <ecNumber evidence="1">4.2.1.20</ecNumber>
    </recommendedName>
</protein>
<proteinExistence type="inferred from homology"/>
<feature type="chain" id="PRO_0000098995" description="Tryptophan synthase beta chain">
    <location>
        <begin position="1"/>
        <end position="396"/>
    </location>
</feature>
<feature type="modified residue" description="N6-(pyridoxal phosphate)lysine" evidence="1">
    <location>
        <position position="88"/>
    </location>
</feature>
<comment type="function">
    <text evidence="1">The beta subunit is responsible for the synthesis of L-tryptophan from indole and L-serine.</text>
</comment>
<comment type="catalytic activity">
    <reaction evidence="1">
        <text>(1S,2R)-1-C-(indol-3-yl)glycerol 3-phosphate + L-serine = D-glyceraldehyde 3-phosphate + L-tryptophan + H2O</text>
        <dbReference type="Rhea" id="RHEA:10532"/>
        <dbReference type="ChEBI" id="CHEBI:15377"/>
        <dbReference type="ChEBI" id="CHEBI:33384"/>
        <dbReference type="ChEBI" id="CHEBI:57912"/>
        <dbReference type="ChEBI" id="CHEBI:58866"/>
        <dbReference type="ChEBI" id="CHEBI:59776"/>
        <dbReference type="EC" id="4.2.1.20"/>
    </reaction>
</comment>
<comment type="cofactor">
    <cofactor evidence="1">
        <name>pyridoxal 5'-phosphate</name>
        <dbReference type="ChEBI" id="CHEBI:597326"/>
    </cofactor>
</comment>
<comment type="pathway">
    <text evidence="1">Amino-acid biosynthesis; L-tryptophan biosynthesis; L-tryptophan from chorismate: step 5/5.</text>
</comment>
<comment type="subunit">
    <text evidence="1">Tetramer of two alpha and two beta chains.</text>
</comment>
<comment type="similarity">
    <text evidence="1">Belongs to the TrpB family.</text>
</comment>
<evidence type="ECO:0000255" key="1">
    <source>
        <dbReference type="HAMAP-Rule" id="MF_00133"/>
    </source>
</evidence>
<name>TRPB_SHEON</name>
<accession>Q8ECV0</accession>
<sequence>MSQLKLNPYFGEYGGMYVPQILVPALKQLESAFVEAQTDESFQAEFTDLLKNYAGRPTALTLTRNLSPNPMVKIYLKREDLLHGGAHKTNQVLGQALLAKRMGKKEIIAETGAGQHGVATALACALLGLKCKVYMGAKDVARQSPNVFRMRLMGAEVIPVTSGSATLKDACNEAMRDWSGSYEKAHYLLGTAAGPHPFPTIVREFQRIIGEETKKQILEREGRLPDAVIACVGGGSNAIGMFADFIDETNVELIGVEPAGKGIDTHMHGAPLKHGKTGIFFGMKAPLMQDSEGQIEESYSISAGLDFPSVGPQHAHLNAIGRARYESATDDEALEAFQLLARCEGIIPALESAHALAYALRLAKECTKETILVVNLSGRGDKDIFTVSDILNGKEE</sequence>